<name>DPHB_METM6</name>
<comment type="function">
    <text evidence="1">S-adenosyl-L-methionine-dependent methyltransferase that catalyzes the trimethylation of the amino group of the modified target histidine residue in translation elongation factor 2 (EF-2), to form an intermediate called diphthine. The three successive methylation reactions represent the second step of diphthamide biosynthesis.</text>
</comment>
<comment type="catalytic activity">
    <reaction evidence="1">
        <text>2-[(3S)-amino-3-carboxypropyl]-L-histidyl-[translation elongation factor 2] + 3 S-adenosyl-L-methionine = diphthine-[translation elongation factor 2] + 3 S-adenosyl-L-homocysteine + 3 H(+)</text>
        <dbReference type="Rhea" id="RHEA:36415"/>
        <dbReference type="Rhea" id="RHEA-COMP:9749"/>
        <dbReference type="Rhea" id="RHEA-COMP:10172"/>
        <dbReference type="ChEBI" id="CHEBI:15378"/>
        <dbReference type="ChEBI" id="CHEBI:57856"/>
        <dbReference type="ChEBI" id="CHEBI:59789"/>
        <dbReference type="ChEBI" id="CHEBI:73995"/>
        <dbReference type="ChEBI" id="CHEBI:82696"/>
        <dbReference type="EC" id="2.1.1.98"/>
    </reaction>
</comment>
<comment type="pathway">
    <text evidence="1">Protein modification; peptidyl-diphthamide biosynthesis.</text>
</comment>
<comment type="subunit">
    <text evidence="1">Homodimer.</text>
</comment>
<comment type="similarity">
    <text evidence="1">Belongs to the diphthine synthase family.</text>
</comment>
<keyword id="KW-0489">Methyltransferase</keyword>
<keyword id="KW-0949">S-adenosyl-L-methionine</keyword>
<keyword id="KW-0808">Transferase</keyword>
<gene>
    <name evidence="1" type="primary">dphB</name>
    <name type="ordered locus">MmarC6_0305</name>
</gene>
<dbReference type="EC" id="2.1.1.98" evidence="1"/>
<dbReference type="EMBL" id="CP000867">
    <property type="protein sequence ID" value="ABX01126.1"/>
    <property type="molecule type" value="Genomic_DNA"/>
</dbReference>
<dbReference type="SMR" id="A9A6D8"/>
<dbReference type="STRING" id="444158.MmarC6_0305"/>
<dbReference type="KEGG" id="mmx:MmarC6_0305"/>
<dbReference type="eggNOG" id="arCOG04161">
    <property type="taxonomic scope" value="Archaea"/>
</dbReference>
<dbReference type="HOGENOM" id="CLU_066040_1_0_2"/>
<dbReference type="OrthoDB" id="39139at2157"/>
<dbReference type="PhylomeDB" id="A9A6D8"/>
<dbReference type="UniPathway" id="UPA00559"/>
<dbReference type="GO" id="GO:0004164">
    <property type="term" value="F:diphthine synthase activity"/>
    <property type="evidence" value="ECO:0007669"/>
    <property type="project" value="UniProtKB-UniRule"/>
</dbReference>
<dbReference type="GO" id="GO:0032259">
    <property type="term" value="P:methylation"/>
    <property type="evidence" value="ECO:0007669"/>
    <property type="project" value="UniProtKB-KW"/>
</dbReference>
<dbReference type="GO" id="GO:0017183">
    <property type="term" value="P:protein histidyl modification to diphthamide"/>
    <property type="evidence" value="ECO:0007669"/>
    <property type="project" value="UniProtKB-UniRule"/>
</dbReference>
<dbReference type="CDD" id="cd11647">
    <property type="entry name" value="DHP5_DphB"/>
    <property type="match status" value="1"/>
</dbReference>
<dbReference type="Gene3D" id="3.40.1010.10">
    <property type="entry name" value="Cobalt-precorrin-4 Transmethylase, Domain 1"/>
    <property type="match status" value="1"/>
</dbReference>
<dbReference type="Gene3D" id="3.30.950.10">
    <property type="entry name" value="Methyltransferase, Cobalt-precorrin-4 Transmethylase, Domain 2"/>
    <property type="match status" value="1"/>
</dbReference>
<dbReference type="HAMAP" id="MF_01084">
    <property type="entry name" value="Diphthine_synth"/>
    <property type="match status" value="1"/>
</dbReference>
<dbReference type="InterPro" id="IPR000878">
    <property type="entry name" value="4pyrrol_Mease"/>
</dbReference>
<dbReference type="InterPro" id="IPR035996">
    <property type="entry name" value="4pyrrol_Methylase_sf"/>
</dbReference>
<dbReference type="InterPro" id="IPR014777">
    <property type="entry name" value="4pyrrole_Mease_sub1"/>
</dbReference>
<dbReference type="InterPro" id="IPR014776">
    <property type="entry name" value="4pyrrole_Mease_sub2"/>
</dbReference>
<dbReference type="InterPro" id="IPR004551">
    <property type="entry name" value="Dphthn_synthase"/>
</dbReference>
<dbReference type="NCBIfam" id="TIGR00522">
    <property type="entry name" value="dph5"/>
    <property type="match status" value="1"/>
</dbReference>
<dbReference type="PANTHER" id="PTHR10882:SF0">
    <property type="entry name" value="DIPHTHINE METHYL ESTER SYNTHASE"/>
    <property type="match status" value="1"/>
</dbReference>
<dbReference type="PANTHER" id="PTHR10882">
    <property type="entry name" value="DIPHTHINE SYNTHASE"/>
    <property type="match status" value="1"/>
</dbReference>
<dbReference type="Pfam" id="PF00590">
    <property type="entry name" value="TP_methylase"/>
    <property type="match status" value="1"/>
</dbReference>
<dbReference type="PIRSF" id="PIRSF036432">
    <property type="entry name" value="Diphthine_synth"/>
    <property type="match status" value="1"/>
</dbReference>
<dbReference type="SUPFAM" id="SSF53790">
    <property type="entry name" value="Tetrapyrrole methylase"/>
    <property type="match status" value="1"/>
</dbReference>
<protein>
    <recommendedName>
        <fullName evidence="1">Diphthine synthase</fullName>
        <ecNumber evidence="1">2.1.1.98</ecNumber>
    </recommendedName>
    <alternativeName>
        <fullName evidence="1">Diphthamide biosynthesis methyltransferase</fullName>
    </alternativeName>
</protein>
<sequence>MLVMAGLGLYDERDVTLKTLDFAKKVDKIYAEFYTAILTGTTMEKVEETLQKPITVLNREKVEYETNKLIEEAKNKDIMFLTAGDPMVATTHVDIAVEARKKGIEVVIINAPSIYSAIGITGLQLYKFGKTTSVVFPEPNYFPETPYDVIKDNLKLGYHTLCLLDIQADKERFMTANEGLDTLLKIEEKRNEKVISGETYAAVVARAGSTKPGLYYGKIKDLINYDFKSPLHCVIIPGKLHFMEEDALKYLFENI</sequence>
<reference key="1">
    <citation type="submission" date="2007-10" db="EMBL/GenBank/DDBJ databases">
        <title>Complete sequence of Methanococcus maripaludis C6.</title>
        <authorList>
            <consortium name="US DOE Joint Genome Institute"/>
            <person name="Copeland A."/>
            <person name="Lucas S."/>
            <person name="Lapidus A."/>
            <person name="Barry K."/>
            <person name="Glavina del Rio T."/>
            <person name="Dalin E."/>
            <person name="Tice H."/>
            <person name="Pitluck S."/>
            <person name="Clum A."/>
            <person name="Schmutz J."/>
            <person name="Larimer F."/>
            <person name="Land M."/>
            <person name="Hauser L."/>
            <person name="Kyrpides N."/>
            <person name="Mikhailova N."/>
            <person name="Sieprawska-Lupa M."/>
            <person name="Whitman W.B."/>
            <person name="Richardson P."/>
        </authorList>
    </citation>
    <scope>NUCLEOTIDE SEQUENCE [LARGE SCALE GENOMIC DNA]</scope>
    <source>
        <strain>C6 / ATCC BAA-1332</strain>
    </source>
</reference>
<proteinExistence type="inferred from homology"/>
<feature type="chain" id="PRO_1000136876" description="Diphthine synthase">
    <location>
        <begin position="1"/>
        <end position="255"/>
    </location>
</feature>
<feature type="binding site" evidence="1">
    <location>
        <position position="9"/>
    </location>
    <ligand>
        <name>S-adenosyl-L-methionine</name>
        <dbReference type="ChEBI" id="CHEBI:59789"/>
    </ligand>
</feature>
<feature type="binding site" evidence="1">
    <location>
        <position position="85"/>
    </location>
    <ligand>
        <name>S-adenosyl-L-methionine</name>
        <dbReference type="ChEBI" id="CHEBI:59789"/>
    </ligand>
</feature>
<feature type="binding site" evidence="1">
    <location>
        <position position="88"/>
    </location>
    <ligand>
        <name>S-adenosyl-L-methionine</name>
        <dbReference type="ChEBI" id="CHEBI:59789"/>
    </ligand>
</feature>
<feature type="binding site" evidence="1">
    <location>
        <begin position="113"/>
        <end position="114"/>
    </location>
    <ligand>
        <name>S-adenosyl-L-methionine</name>
        <dbReference type="ChEBI" id="CHEBI:59789"/>
    </ligand>
</feature>
<feature type="binding site" evidence="1">
    <location>
        <position position="164"/>
    </location>
    <ligand>
        <name>S-adenosyl-L-methionine</name>
        <dbReference type="ChEBI" id="CHEBI:59789"/>
    </ligand>
</feature>
<feature type="binding site" evidence="1">
    <location>
        <position position="207"/>
    </location>
    <ligand>
        <name>S-adenosyl-L-methionine</name>
        <dbReference type="ChEBI" id="CHEBI:59789"/>
    </ligand>
</feature>
<feature type="binding site" evidence="1">
    <location>
        <position position="232"/>
    </location>
    <ligand>
        <name>S-adenosyl-L-methionine</name>
        <dbReference type="ChEBI" id="CHEBI:59789"/>
    </ligand>
</feature>
<accession>A9A6D8</accession>
<organism>
    <name type="scientific">Methanococcus maripaludis (strain C6 / ATCC BAA-1332)</name>
    <dbReference type="NCBI Taxonomy" id="444158"/>
    <lineage>
        <taxon>Archaea</taxon>
        <taxon>Methanobacteriati</taxon>
        <taxon>Methanobacteriota</taxon>
        <taxon>Methanomada group</taxon>
        <taxon>Methanococci</taxon>
        <taxon>Methanococcales</taxon>
        <taxon>Methanococcaceae</taxon>
        <taxon>Methanococcus</taxon>
    </lineage>
</organism>
<evidence type="ECO:0000255" key="1">
    <source>
        <dbReference type="HAMAP-Rule" id="MF_01084"/>
    </source>
</evidence>